<gene>
    <name evidence="1" type="primary">plsX</name>
    <name type="ordered locus">GM21_1153</name>
</gene>
<name>PLSX_GEOSM</name>
<feature type="chain" id="PRO_1000201891" description="Phosphate acyltransferase">
    <location>
        <begin position="1"/>
        <end position="352"/>
    </location>
</feature>
<feature type="region of interest" description="Disordered" evidence="2">
    <location>
        <begin position="328"/>
        <end position="352"/>
    </location>
</feature>
<feature type="compositionally biased region" description="Basic and acidic residues" evidence="2">
    <location>
        <begin position="328"/>
        <end position="339"/>
    </location>
</feature>
<organism>
    <name type="scientific">Geobacter sp. (strain M21)</name>
    <dbReference type="NCBI Taxonomy" id="443144"/>
    <lineage>
        <taxon>Bacteria</taxon>
        <taxon>Pseudomonadati</taxon>
        <taxon>Thermodesulfobacteriota</taxon>
        <taxon>Desulfuromonadia</taxon>
        <taxon>Geobacterales</taxon>
        <taxon>Geobacteraceae</taxon>
        <taxon>Geobacter</taxon>
    </lineage>
</organism>
<sequence>MRVAVDVMGGDNAPHVEVEGAVAAAREFGVPVTLVGDVEKVRAELARHDCKGLDIEVWHASEVVGMHDSASDAVRKKKDSSIRVAFELVKGGEAVAVVSAGNSGATMAAGMFVLKRMKGIDRAAIAQLFPTVSGKTLVLDVGGNVDCKPIHLVQFAVMGEVYARFVMGVDNPKVGLLSNGEEASKGNELTRETSALLREKPINYIGYVEGRDIFNGSVDVVVCDGFVGNVALKLSEGLAEAVGKMLKAEIKSSFLSQIGYLLSRKAFNNFKKTVDYAEYGGAPLLGINGVGMICHGGSNPKAIKNAIRFAHEYALKGVNGRMAEKLNESFPGDAREREGAQAPDAGTERVAS</sequence>
<accession>C6E341</accession>
<protein>
    <recommendedName>
        <fullName evidence="1">Phosphate acyltransferase</fullName>
        <ecNumber evidence="1">2.3.1.274</ecNumber>
    </recommendedName>
    <alternativeName>
        <fullName evidence="1">Acyl-ACP phosphotransacylase</fullName>
    </alternativeName>
    <alternativeName>
        <fullName evidence="1">Acyl-[acyl-carrier-protein]--phosphate acyltransferase</fullName>
    </alternativeName>
    <alternativeName>
        <fullName evidence="1">Phosphate-acyl-ACP acyltransferase</fullName>
    </alternativeName>
</protein>
<dbReference type="EC" id="2.3.1.274" evidence="1"/>
<dbReference type="EMBL" id="CP001661">
    <property type="protein sequence ID" value="ACT17214.1"/>
    <property type="molecule type" value="Genomic_DNA"/>
</dbReference>
<dbReference type="SMR" id="C6E341"/>
<dbReference type="STRING" id="443144.GM21_1153"/>
<dbReference type="KEGG" id="gem:GM21_1153"/>
<dbReference type="eggNOG" id="COG0416">
    <property type="taxonomic scope" value="Bacteria"/>
</dbReference>
<dbReference type="HOGENOM" id="CLU_039379_1_1_7"/>
<dbReference type="OrthoDB" id="9806408at2"/>
<dbReference type="UniPathway" id="UPA00085"/>
<dbReference type="GO" id="GO:0005737">
    <property type="term" value="C:cytoplasm"/>
    <property type="evidence" value="ECO:0007669"/>
    <property type="project" value="UniProtKB-SubCell"/>
</dbReference>
<dbReference type="GO" id="GO:0043811">
    <property type="term" value="F:phosphate:acyl-[acyl carrier protein] acyltransferase activity"/>
    <property type="evidence" value="ECO:0007669"/>
    <property type="project" value="UniProtKB-UniRule"/>
</dbReference>
<dbReference type="GO" id="GO:0006633">
    <property type="term" value="P:fatty acid biosynthetic process"/>
    <property type="evidence" value="ECO:0007669"/>
    <property type="project" value="UniProtKB-UniRule"/>
</dbReference>
<dbReference type="GO" id="GO:0008654">
    <property type="term" value="P:phospholipid biosynthetic process"/>
    <property type="evidence" value="ECO:0007669"/>
    <property type="project" value="UniProtKB-KW"/>
</dbReference>
<dbReference type="Gene3D" id="3.40.718.10">
    <property type="entry name" value="Isopropylmalate Dehydrogenase"/>
    <property type="match status" value="1"/>
</dbReference>
<dbReference type="HAMAP" id="MF_00019">
    <property type="entry name" value="PlsX"/>
    <property type="match status" value="1"/>
</dbReference>
<dbReference type="InterPro" id="IPR003664">
    <property type="entry name" value="FA_synthesis"/>
</dbReference>
<dbReference type="InterPro" id="IPR012281">
    <property type="entry name" value="Phospholipid_synth_PlsX-like"/>
</dbReference>
<dbReference type="NCBIfam" id="TIGR00182">
    <property type="entry name" value="plsX"/>
    <property type="match status" value="1"/>
</dbReference>
<dbReference type="PANTHER" id="PTHR30100">
    <property type="entry name" value="FATTY ACID/PHOSPHOLIPID SYNTHESIS PROTEIN PLSX"/>
    <property type="match status" value="1"/>
</dbReference>
<dbReference type="PANTHER" id="PTHR30100:SF1">
    <property type="entry name" value="PHOSPHATE ACYLTRANSFERASE"/>
    <property type="match status" value="1"/>
</dbReference>
<dbReference type="Pfam" id="PF02504">
    <property type="entry name" value="FA_synthesis"/>
    <property type="match status" value="1"/>
</dbReference>
<dbReference type="PIRSF" id="PIRSF002465">
    <property type="entry name" value="Phsphlp_syn_PlsX"/>
    <property type="match status" value="1"/>
</dbReference>
<dbReference type="SUPFAM" id="SSF53659">
    <property type="entry name" value="Isocitrate/Isopropylmalate dehydrogenase-like"/>
    <property type="match status" value="1"/>
</dbReference>
<evidence type="ECO:0000255" key="1">
    <source>
        <dbReference type="HAMAP-Rule" id="MF_00019"/>
    </source>
</evidence>
<evidence type="ECO:0000256" key="2">
    <source>
        <dbReference type="SAM" id="MobiDB-lite"/>
    </source>
</evidence>
<proteinExistence type="inferred from homology"/>
<keyword id="KW-0963">Cytoplasm</keyword>
<keyword id="KW-0444">Lipid biosynthesis</keyword>
<keyword id="KW-0443">Lipid metabolism</keyword>
<keyword id="KW-0594">Phospholipid biosynthesis</keyword>
<keyword id="KW-1208">Phospholipid metabolism</keyword>
<keyword id="KW-0808">Transferase</keyword>
<comment type="function">
    <text evidence="1">Catalyzes the reversible formation of acyl-phosphate (acyl-PO(4)) from acyl-[acyl-carrier-protein] (acyl-ACP). This enzyme utilizes acyl-ACP as fatty acyl donor, but not acyl-CoA.</text>
</comment>
<comment type="catalytic activity">
    <reaction evidence="1">
        <text>a fatty acyl-[ACP] + phosphate = an acyl phosphate + holo-[ACP]</text>
        <dbReference type="Rhea" id="RHEA:42292"/>
        <dbReference type="Rhea" id="RHEA-COMP:9685"/>
        <dbReference type="Rhea" id="RHEA-COMP:14125"/>
        <dbReference type="ChEBI" id="CHEBI:43474"/>
        <dbReference type="ChEBI" id="CHEBI:59918"/>
        <dbReference type="ChEBI" id="CHEBI:64479"/>
        <dbReference type="ChEBI" id="CHEBI:138651"/>
        <dbReference type="EC" id="2.3.1.274"/>
    </reaction>
</comment>
<comment type="pathway">
    <text evidence="1">Lipid metabolism; phospholipid metabolism.</text>
</comment>
<comment type="subunit">
    <text evidence="1">Homodimer. Probably interacts with PlsY.</text>
</comment>
<comment type="subcellular location">
    <subcellularLocation>
        <location evidence="1">Cytoplasm</location>
    </subcellularLocation>
    <text evidence="1">Associated with the membrane possibly through PlsY.</text>
</comment>
<comment type="similarity">
    <text evidence="1">Belongs to the PlsX family.</text>
</comment>
<reference key="1">
    <citation type="submission" date="2009-07" db="EMBL/GenBank/DDBJ databases">
        <title>Complete sequence of Geobacter sp. M21.</title>
        <authorList>
            <consortium name="US DOE Joint Genome Institute"/>
            <person name="Lucas S."/>
            <person name="Copeland A."/>
            <person name="Lapidus A."/>
            <person name="Glavina del Rio T."/>
            <person name="Dalin E."/>
            <person name="Tice H."/>
            <person name="Bruce D."/>
            <person name="Goodwin L."/>
            <person name="Pitluck S."/>
            <person name="Saunders E."/>
            <person name="Brettin T."/>
            <person name="Detter J.C."/>
            <person name="Han C."/>
            <person name="Larimer F."/>
            <person name="Land M."/>
            <person name="Hauser L."/>
            <person name="Kyrpides N."/>
            <person name="Ovchinnikova G."/>
            <person name="Lovley D."/>
        </authorList>
    </citation>
    <scope>NUCLEOTIDE SEQUENCE [LARGE SCALE GENOMIC DNA]</scope>
    <source>
        <strain>M21</strain>
    </source>
</reference>